<comment type="function">
    <text>Binds to actin and affects the structure of the cytoskeleton. At high concentrations, profilin prevents the polymerization of actin, whereas it enhances it at low concentrations. By binding to PIP2, it inhibits the formation of IP3 and DG.</text>
</comment>
<comment type="subunit">
    <text evidence="1 3">Occurs in many kinds of cells as a complex with monomeric actin in a 1:1 ratio (PubMed:7758455). Interacts with PFN2 (By similarity).</text>
</comment>
<comment type="subunit">
    <molecule>Isoform IIa</molecule>
    <text evidence="2">Interacts with ACTMAP (via N-terminus); the interaction may facilitate efficient cleavage of the acetylated N-terminus of immature actin by ACTMAP.</text>
</comment>
<comment type="subunit">
    <molecule>Isoform IIb</molecule>
    <text evidence="2">Interacts with ACTMAP (via N-terminus); the interaction may facilitate efficient cleavage of the acetylated N-terminus of immature actin by ACTMAP.</text>
</comment>
<comment type="interaction">
    <interactant intactId="EBI-473138">
        <id>P35080</id>
    </interactant>
    <interactant intactId="EBI-709973">
        <id>Q14789</id>
        <label>GOLGB1</label>
    </interactant>
    <organismsDiffer>false</organismsDiffer>
    <experiments>2</experiments>
</comment>
<comment type="interaction">
    <interactant intactId="EBI-473138">
        <id>P35080</id>
    </interactant>
    <interactant intactId="EBI-466029">
        <id>P42858</id>
        <label>HTT</label>
    </interactant>
    <organismsDiffer>false</organismsDiffer>
    <experiments>7</experiments>
</comment>
<comment type="interaction">
    <interactant intactId="EBI-473138">
        <id>P35080</id>
    </interactant>
    <interactant intactId="EBI-6142604">
        <id>O08816</id>
        <label>Wasl</label>
    </interactant>
    <organismsDiffer>true</organismsDiffer>
    <experiments>3</experiments>
</comment>
<comment type="subcellular location">
    <subcellularLocation>
        <location>Cytoplasm</location>
        <location>Cytoskeleton</location>
    </subcellularLocation>
</comment>
<comment type="alternative products">
    <event type="alternative splicing"/>
    <isoform>
        <id>P35080-1</id>
        <name>IIa</name>
        <sequence type="displayed"/>
    </isoform>
    <isoform>
        <id>P35080-2</id>
        <name>IIb</name>
        <sequence type="described" ref="VSP_005217"/>
    </isoform>
</comment>
<comment type="tissue specificity">
    <text>Highly expressed in brain, skeletal muscle and kidney and less strongly in heart, placenta, lung and liver.</text>
</comment>
<comment type="similarity">
    <text evidence="7">Belongs to the profilin family.</text>
</comment>
<feature type="initiator methionine" description="Removed" evidence="8">
    <location>
        <position position="1"/>
    </location>
</feature>
<feature type="chain" id="PRO_0000199575" description="Profilin-2">
    <location>
        <begin position="2"/>
        <end position="140"/>
    </location>
</feature>
<feature type="modified residue" description="N-acetylalanine" evidence="8">
    <location>
        <position position="2"/>
    </location>
</feature>
<feature type="splice variant" id="VSP_005217" description="In isoform IIb." evidence="4 5 6">
    <original>VLVFVMGKEGVHGGGLNKKAYSMAKYLRDSGF</original>
    <variation>ALVIVMGKEGVHGGTLNKKAYELALYLRRSDV</variation>
    <location>
        <begin position="109"/>
        <end position="140"/>
    </location>
</feature>
<feature type="sequence conflict" description="In Ref. 5; AAH18049." evidence="7" ref="5">
    <original>T</original>
    <variation>A</variation>
    <location>
        <position position="65"/>
    </location>
</feature>
<feature type="helix" evidence="9">
    <location>
        <begin position="5"/>
        <end position="11"/>
    </location>
</feature>
<feature type="strand" evidence="9">
    <location>
        <begin position="17"/>
        <end position="24"/>
    </location>
</feature>
<feature type="strand" evidence="9">
    <location>
        <begin position="26"/>
        <end position="28"/>
    </location>
</feature>
<feature type="strand" evidence="9">
    <location>
        <begin position="30"/>
        <end position="34"/>
    </location>
</feature>
<feature type="helix" evidence="9">
    <location>
        <begin position="40"/>
        <end position="42"/>
    </location>
</feature>
<feature type="helix" evidence="9">
    <location>
        <begin position="45"/>
        <end position="52"/>
    </location>
</feature>
<feature type="helix" evidence="9">
    <location>
        <begin position="58"/>
        <end position="62"/>
    </location>
</feature>
<feature type="strand" evidence="9">
    <location>
        <begin position="64"/>
        <end position="66"/>
    </location>
</feature>
<feature type="strand" evidence="9">
    <location>
        <begin position="69"/>
        <end position="80"/>
    </location>
</feature>
<feature type="strand" evidence="9">
    <location>
        <begin position="85"/>
        <end position="90"/>
    </location>
</feature>
<feature type="strand" evidence="9">
    <location>
        <begin position="93"/>
        <end position="95"/>
    </location>
</feature>
<feature type="strand" evidence="9">
    <location>
        <begin position="100"/>
        <end position="105"/>
    </location>
</feature>
<feature type="strand" evidence="9">
    <location>
        <begin position="107"/>
        <end position="115"/>
    </location>
</feature>
<feature type="helix" evidence="9">
    <location>
        <begin position="121"/>
        <end position="137"/>
    </location>
</feature>
<accession>P35080</accession>
<accession>B2R4C8</accession>
<accession>D3DNI4</accession>
<accession>Q4VBQ4</accession>
<accession>Q8WVF9</accession>
<accession>Q9HBK2</accession>
<gene>
    <name type="primary">PFN2</name>
</gene>
<evidence type="ECO:0000250" key="1">
    <source>
        <dbReference type="UniProtKB" id="Q9JJV2"/>
    </source>
</evidence>
<evidence type="ECO:0000269" key="2">
    <source>
    </source>
</evidence>
<evidence type="ECO:0000269" key="3">
    <source>
    </source>
</evidence>
<evidence type="ECO:0000303" key="4">
    <source>
    </source>
</evidence>
<evidence type="ECO:0000303" key="5">
    <source>
    </source>
</evidence>
<evidence type="ECO:0000303" key="6">
    <source>
    </source>
</evidence>
<evidence type="ECO:0000305" key="7"/>
<evidence type="ECO:0007744" key="8">
    <source>
    </source>
</evidence>
<evidence type="ECO:0007829" key="9">
    <source>
        <dbReference type="PDB" id="1D1J"/>
    </source>
</evidence>
<proteinExistence type="evidence at protein level"/>
<sequence>MAGWQSYVDNLMCDGCCQEAAIVGYCDAKYVWAATAGGVFQSITPIEIDMIVGKDREGFFTNGLTLGAKKCSVIRDSLYVDGDCTMDIRTKSQGGEPTYNVAVGRAGRVLVFVMGKEGVHGGGLNKKAYSMAKYLRDSGF</sequence>
<reference key="1">
    <citation type="journal article" date="1993" name="FEBS Lett.">
        <title>Cloning and expression of a novel human profilin variant, profilin II.</title>
        <authorList>
            <person name="Honore B."/>
            <person name="Madsen P.S."/>
            <person name="Andersen A.H."/>
            <person name="Leffers H."/>
        </authorList>
    </citation>
    <scope>NUCLEOTIDE SEQUENCE [MRNA] (ISOFORM IIB)</scope>
    <source>
        <tissue>Epithelium</tissue>
    </source>
</reference>
<reference key="2">
    <citation type="journal article" date="2000" name="Mol. Cell. Biol.">
        <title>Profilin II is alternatively spliced, resulting in profilin isoforms that are differentially expressed and have distinct biochemical properties.</title>
        <authorList>
            <person name="Lambrechts A."/>
            <person name="Braun A."/>
            <person name="Jonckheere V."/>
            <person name="Aszodi A."/>
            <person name="Lanier L.M."/>
            <person name="Robbens J."/>
            <person name="Van Colen I."/>
            <person name="Vandekerckhove J."/>
            <person name="Faessler R."/>
            <person name="Ampe C."/>
        </authorList>
    </citation>
    <scope>NUCLEOTIDE SEQUENCE [MRNA] (ISOFORM IIA)</scope>
    <source>
        <tissue>Brain</tissue>
    </source>
</reference>
<reference key="3">
    <citation type="journal article" date="2004" name="Nat. Genet.">
        <title>Complete sequencing and characterization of 21,243 full-length human cDNAs.</title>
        <authorList>
            <person name="Ota T."/>
            <person name="Suzuki Y."/>
            <person name="Nishikawa T."/>
            <person name="Otsuki T."/>
            <person name="Sugiyama T."/>
            <person name="Irie R."/>
            <person name="Wakamatsu A."/>
            <person name="Hayashi K."/>
            <person name="Sato H."/>
            <person name="Nagai K."/>
            <person name="Kimura K."/>
            <person name="Makita H."/>
            <person name="Sekine M."/>
            <person name="Obayashi M."/>
            <person name="Nishi T."/>
            <person name="Shibahara T."/>
            <person name="Tanaka T."/>
            <person name="Ishii S."/>
            <person name="Yamamoto J."/>
            <person name="Saito K."/>
            <person name="Kawai Y."/>
            <person name="Isono Y."/>
            <person name="Nakamura Y."/>
            <person name="Nagahari K."/>
            <person name="Murakami K."/>
            <person name="Yasuda T."/>
            <person name="Iwayanagi T."/>
            <person name="Wagatsuma M."/>
            <person name="Shiratori A."/>
            <person name="Sudo H."/>
            <person name="Hosoiri T."/>
            <person name="Kaku Y."/>
            <person name="Kodaira H."/>
            <person name="Kondo H."/>
            <person name="Sugawara M."/>
            <person name="Takahashi M."/>
            <person name="Kanda K."/>
            <person name="Yokoi T."/>
            <person name="Furuya T."/>
            <person name="Kikkawa E."/>
            <person name="Omura Y."/>
            <person name="Abe K."/>
            <person name="Kamihara K."/>
            <person name="Katsuta N."/>
            <person name="Sato K."/>
            <person name="Tanikawa M."/>
            <person name="Yamazaki M."/>
            <person name="Ninomiya K."/>
            <person name="Ishibashi T."/>
            <person name="Yamashita H."/>
            <person name="Murakawa K."/>
            <person name="Fujimori K."/>
            <person name="Tanai H."/>
            <person name="Kimata M."/>
            <person name="Watanabe M."/>
            <person name="Hiraoka S."/>
            <person name="Chiba Y."/>
            <person name="Ishida S."/>
            <person name="Ono Y."/>
            <person name="Takiguchi S."/>
            <person name="Watanabe S."/>
            <person name="Yosida M."/>
            <person name="Hotuta T."/>
            <person name="Kusano J."/>
            <person name="Kanehori K."/>
            <person name="Takahashi-Fujii A."/>
            <person name="Hara H."/>
            <person name="Tanase T.-O."/>
            <person name="Nomura Y."/>
            <person name="Togiya S."/>
            <person name="Komai F."/>
            <person name="Hara R."/>
            <person name="Takeuchi K."/>
            <person name="Arita M."/>
            <person name="Imose N."/>
            <person name="Musashino K."/>
            <person name="Yuuki H."/>
            <person name="Oshima A."/>
            <person name="Sasaki N."/>
            <person name="Aotsuka S."/>
            <person name="Yoshikawa Y."/>
            <person name="Matsunawa H."/>
            <person name="Ichihara T."/>
            <person name="Shiohata N."/>
            <person name="Sano S."/>
            <person name="Moriya S."/>
            <person name="Momiyama H."/>
            <person name="Satoh N."/>
            <person name="Takami S."/>
            <person name="Terashima Y."/>
            <person name="Suzuki O."/>
            <person name="Nakagawa S."/>
            <person name="Senoh A."/>
            <person name="Mizoguchi H."/>
            <person name="Goto Y."/>
            <person name="Shimizu F."/>
            <person name="Wakebe H."/>
            <person name="Hishigaki H."/>
            <person name="Watanabe T."/>
            <person name="Sugiyama A."/>
            <person name="Takemoto M."/>
            <person name="Kawakami B."/>
            <person name="Yamazaki M."/>
            <person name="Watanabe K."/>
            <person name="Kumagai A."/>
            <person name="Itakura S."/>
            <person name="Fukuzumi Y."/>
            <person name="Fujimori Y."/>
            <person name="Komiyama M."/>
            <person name="Tashiro H."/>
            <person name="Tanigami A."/>
            <person name="Fujiwara T."/>
            <person name="Ono T."/>
            <person name="Yamada K."/>
            <person name="Fujii Y."/>
            <person name="Ozaki K."/>
            <person name="Hirao M."/>
            <person name="Ohmori Y."/>
            <person name="Kawabata A."/>
            <person name="Hikiji T."/>
            <person name="Kobatake N."/>
            <person name="Inagaki H."/>
            <person name="Ikema Y."/>
            <person name="Okamoto S."/>
            <person name="Okitani R."/>
            <person name="Kawakami T."/>
            <person name="Noguchi S."/>
            <person name="Itoh T."/>
            <person name="Shigeta K."/>
            <person name="Senba T."/>
            <person name="Matsumura K."/>
            <person name="Nakajima Y."/>
            <person name="Mizuno T."/>
            <person name="Morinaga M."/>
            <person name="Sasaki M."/>
            <person name="Togashi T."/>
            <person name="Oyama M."/>
            <person name="Hata H."/>
            <person name="Watanabe M."/>
            <person name="Komatsu T."/>
            <person name="Mizushima-Sugano J."/>
            <person name="Satoh T."/>
            <person name="Shirai Y."/>
            <person name="Takahashi Y."/>
            <person name="Nakagawa K."/>
            <person name="Okumura K."/>
            <person name="Nagase T."/>
            <person name="Nomura N."/>
            <person name="Kikuchi H."/>
            <person name="Masuho Y."/>
            <person name="Yamashita R."/>
            <person name="Nakai K."/>
            <person name="Yada T."/>
            <person name="Nakamura Y."/>
            <person name="Ohara O."/>
            <person name="Isogai T."/>
            <person name="Sugano S."/>
        </authorList>
    </citation>
    <scope>NUCLEOTIDE SEQUENCE [LARGE SCALE MRNA] (ISOFORMS IIA AND IIB)</scope>
</reference>
<reference key="4">
    <citation type="submission" date="2005-09" db="EMBL/GenBank/DDBJ databases">
        <authorList>
            <person name="Mural R.J."/>
            <person name="Istrail S."/>
            <person name="Sutton G.G."/>
            <person name="Florea L."/>
            <person name="Halpern A.L."/>
            <person name="Mobarry C.M."/>
            <person name="Lippert R."/>
            <person name="Walenz B."/>
            <person name="Shatkay H."/>
            <person name="Dew I."/>
            <person name="Miller J.R."/>
            <person name="Flanigan M.J."/>
            <person name="Edwards N.J."/>
            <person name="Bolanos R."/>
            <person name="Fasulo D."/>
            <person name="Halldorsson B.V."/>
            <person name="Hannenhalli S."/>
            <person name="Turner R."/>
            <person name="Yooseph S."/>
            <person name="Lu F."/>
            <person name="Nusskern D.R."/>
            <person name="Shue B.C."/>
            <person name="Zheng X.H."/>
            <person name="Zhong F."/>
            <person name="Delcher A.L."/>
            <person name="Huson D.H."/>
            <person name="Kravitz S.A."/>
            <person name="Mouchard L."/>
            <person name="Reinert K."/>
            <person name="Remington K.A."/>
            <person name="Clark A.G."/>
            <person name="Waterman M.S."/>
            <person name="Eichler E.E."/>
            <person name="Adams M.D."/>
            <person name="Hunkapiller M.W."/>
            <person name="Myers E.W."/>
            <person name="Venter J.C."/>
        </authorList>
    </citation>
    <scope>NUCLEOTIDE SEQUENCE [LARGE SCALE GENOMIC DNA]</scope>
</reference>
<reference key="5">
    <citation type="journal article" date="2004" name="Genome Res.">
        <title>The status, quality, and expansion of the NIH full-length cDNA project: the Mammalian Gene Collection (MGC).</title>
        <authorList>
            <consortium name="The MGC Project Team"/>
        </authorList>
    </citation>
    <scope>NUCLEOTIDE SEQUENCE [LARGE SCALE MRNA] (ISOFORMS IIA AND IIB)</scope>
    <source>
        <tissue>Brain</tissue>
        <tissue>Lung</tissue>
        <tissue>Spinal cord</tissue>
    </source>
</reference>
<reference key="6">
    <citation type="submission" date="2008-12" db="UniProtKB">
        <authorList>
            <person name="Lubec G."/>
            <person name="Chen W.-Q."/>
            <person name="Sun Y."/>
        </authorList>
    </citation>
    <scope>PROTEIN SEQUENCE OF 30-69; 76-89; 92-105 AND 109-116</scope>
    <scope>IDENTIFICATION BY MASS SPECTROMETRY</scope>
    <source>
        <tissue>Fetal brain cortex</tissue>
    </source>
</reference>
<reference key="7">
    <citation type="journal article" date="1995" name="Eur. J. Biochem.">
        <title>Distinct biochemical characteristics of the two human profilin isoforms.</title>
        <authorList>
            <person name="Gieselmann R."/>
            <person name="Kwiatkowski D.J."/>
            <person name="Janmey P.A."/>
            <person name="Witke W."/>
        </authorList>
    </citation>
    <scope>INTERACTION WITH ACTIN</scope>
</reference>
<reference key="8">
    <citation type="journal article" date="2011" name="BMC Syst. Biol.">
        <title>Initial characterization of the human central proteome.</title>
        <authorList>
            <person name="Burkard T.R."/>
            <person name="Planyavsky M."/>
            <person name="Kaupe I."/>
            <person name="Breitwieser F.P."/>
            <person name="Buerckstuemmer T."/>
            <person name="Bennett K.L."/>
            <person name="Superti-Furga G."/>
            <person name="Colinge J."/>
        </authorList>
    </citation>
    <scope>IDENTIFICATION BY MASS SPECTROMETRY [LARGE SCALE ANALYSIS]</scope>
</reference>
<reference key="9">
    <citation type="journal article" date="2012" name="Mol. Cell. Proteomics">
        <title>Comparative large-scale characterisation of plant vs. mammal proteins reveals similar and idiosyncratic N-alpha acetylation features.</title>
        <authorList>
            <person name="Bienvenut W.V."/>
            <person name="Sumpton D."/>
            <person name="Martinez A."/>
            <person name="Lilla S."/>
            <person name="Espagne C."/>
            <person name="Meinnel T."/>
            <person name="Giglione C."/>
        </authorList>
    </citation>
    <scope>ACETYLATION [LARGE SCALE ANALYSIS] AT ALA-2</scope>
    <scope>CLEAVAGE OF INITIATOR METHIONINE [LARGE SCALE ANALYSIS]</scope>
    <scope>IDENTIFICATION BY MASS SPECTROMETRY [LARGE SCALE ANALYSIS]</scope>
</reference>
<reference key="10">
    <citation type="journal article" date="2022" name="Science">
        <title>Actin maturation requires the ACTMAP/C19orf54 protease.</title>
        <authorList>
            <person name="Haahr P."/>
            <person name="Galli R.A."/>
            <person name="van den Hengel L.G."/>
            <person name="Bleijerveld O.B."/>
            <person name="Kazokaite-Adomaitiene J."/>
            <person name="Song J.Y."/>
            <person name="Kroese L.J."/>
            <person name="Krimpenfort P."/>
            <person name="Baltissen M.P."/>
            <person name="Vermeulen M."/>
            <person name="Ottenheijm C.A.C."/>
            <person name="Brummelkamp T.R."/>
        </authorList>
    </citation>
    <scope>INTERACTION WITH ACTMAP</scope>
</reference>
<reference key="11">
    <citation type="journal article" date="1999" name="J. Mol. Biol.">
        <title>X-ray structure determination of human profilin II: a comparative structural analysis of human profilins.</title>
        <authorList>
            <person name="Nodelman I.M."/>
            <person name="Bowman G.D."/>
            <person name="Lindberg U."/>
            <person name="Schutt C.E."/>
        </authorList>
    </citation>
    <scope>X-RAY CRYSTALLOGRAPHY (2.2 ANGSTROMS)</scope>
</reference>
<dbReference type="EMBL" id="L10678">
    <property type="protein sequence ID" value="AAA03022.1"/>
    <property type="molecule type" value="mRNA"/>
</dbReference>
<dbReference type="EMBL" id="AF228738">
    <property type="protein sequence ID" value="AAG24949.1"/>
    <property type="molecule type" value="mRNA"/>
</dbReference>
<dbReference type="EMBL" id="AK311780">
    <property type="protein sequence ID" value="BAG34723.1"/>
    <property type="molecule type" value="mRNA"/>
</dbReference>
<dbReference type="EMBL" id="AK311782">
    <property type="protein sequence ID" value="BAG34725.1"/>
    <property type="molecule type" value="mRNA"/>
</dbReference>
<dbReference type="EMBL" id="CH471052">
    <property type="protein sequence ID" value="EAW78850.1"/>
    <property type="molecule type" value="Genomic_DNA"/>
</dbReference>
<dbReference type="EMBL" id="BC002964">
    <property type="status" value="NOT_ANNOTATED_CDS"/>
    <property type="molecule type" value="mRNA"/>
</dbReference>
<dbReference type="EMBL" id="CH471052">
    <property type="protein sequence ID" value="EAW78852.1"/>
    <property type="molecule type" value="Genomic_DNA"/>
</dbReference>
<dbReference type="EMBL" id="BC018049">
    <property type="protein sequence ID" value="AAH18049.1"/>
    <property type="molecule type" value="mRNA"/>
</dbReference>
<dbReference type="EMBL" id="BC043646">
    <property type="protein sequence ID" value="AAH43646.1"/>
    <property type="molecule type" value="mRNA"/>
</dbReference>
<dbReference type="EMBL" id="BC095444">
    <property type="protein sequence ID" value="AAH95444.1"/>
    <property type="molecule type" value="mRNA"/>
</dbReference>
<dbReference type="CCDS" id="CCDS3148.1">
    <molecule id="P35080-1"/>
</dbReference>
<dbReference type="CCDS" id="CCDS46934.1">
    <molecule id="P35080-2"/>
</dbReference>
<dbReference type="PIR" id="S36804">
    <property type="entry name" value="S36804"/>
</dbReference>
<dbReference type="RefSeq" id="NP_002619.1">
    <molecule id="P35080-2"/>
    <property type="nucleotide sequence ID" value="NM_002628.5"/>
</dbReference>
<dbReference type="RefSeq" id="NP_444252.1">
    <molecule id="P35080-1"/>
    <property type="nucleotide sequence ID" value="NM_053024.4"/>
</dbReference>
<dbReference type="PDB" id="1D1J">
    <property type="method" value="X-ray"/>
    <property type="resolution" value="2.20 A"/>
    <property type="chains" value="A/B/C/D=2-138"/>
</dbReference>
<dbReference type="PDBsum" id="1D1J"/>
<dbReference type="BMRB" id="P35080"/>
<dbReference type="SMR" id="P35080"/>
<dbReference type="BioGRID" id="111238">
    <property type="interactions" value="144"/>
</dbReference>
<dbReference type="FunCoup" id="P35080">
    <property type="interactions" value="881"/>
</dbReference>
<dbReference type="IntAct" id="P35080">
    <property type="interactions" value="61"/>
</dbReference>
<dbReference type="MINT" id="P35080"/>
<dbReference type="STRING" id="9606.ENSP00000239940"/>
<dbReference type="DrugBank" id="DB02580">
    <property type="generic name" value="Pentaglyme"/>
</dbReference>
<dbReference type="DrugBank" id="DB02078">
    <property type="generic name" value="Triglyme"/>
</dbReference>
<dbReference type="GlyGen" id="P35080">
    <property type="glycosylation" value="1 site, 1 O-linked glycan (1 site)"/>
</dbReference>
<dbReference type="iPTMnet" id="P35080"/>
<dbReference type="MetOSite" id="P35080"/>
<dbReference type="PhosphoSitePlus" id="P35080"/>
<dbReference type="SwissPalm" id="P35080"/>
<dbReference type="BioMuta" id="PFN2"/>
<dbReference type="DMDM" id="20178322"/>
<dbReference type="REPRODUCTION-2DPAGE" id="P35080"/>
<dbReference type="jPOST" id="P35080"/>
<dbReference type="MassIVE" id="P35080"/>
<dbReference type="PaxDb" id="9606-ENSP00000239940"/>
<dbReference type="PeptideAtlas" id="P35080"/>
<dbReference type="ProteomicsDB" id="54978">
    <molecule id="P35080-1"/>
</dbReference>
<dbReference type="ProteomicsDB" id="54979">
    <molecule id="P35080-2"/>
</dbReference>
<dbReference type="Pumba" id="P35080"/>
<dbReference type="Antibodypedia" id="33583">
    <property type="antibodies" value="263 antibodies from 31 providers"/>
</dbReference>
<dbReference type="DNASU" id="5217"/>
<dbReference type="Ensembl" id="ENST00000239940.12">
    <molecule id="P35080-1"/>
    <property type="protein sequence ID" value="ENSP00000239940.7"/>
    <property type="gene ID" value="ENSG00000070087.15"/>
</dbReference>
<dbReference type="Ensembl" id="ENST00000452853.6">
    <molecule id="P35080-2"/>
    <property type="protein sequence ID" value="ENSP00000410464.2"/>
    <property type="gene ID" value="ENSG00000070087.15"/>
</dbReference>
<dbReference type="GeneID" id="5217"/>
<dbReference type="KEGG" id="hsa:5217"/>
<dbReference type="MANE-Select" id="ENST00000239940.12">
    <property type="protein sequence ID" value="ENSP00000239940.7"/>
    <property type="RefSeq nucleotide sequence ID" value="NM_053024.4"/>
    <property type="RefSeq protein sequence ID" value="NP_444252.1"/>
</dbReference>
<dbReference type="UCSC" id="uc003ext.3">
    <molecule id="P35080-1"/>
    <property type="organism name" value="human"/>
</dbReference>
<dbReference type="AGR" id="HGNC:8882"/>
<dbReference type="CTD" id="5217"/>
<dbReference type="DisGeNET" id="5217"/>
<dbReference type="GeneCards" id="PFN2"/>
<dbReference type="HGNC" id="HGNC:8882">
    <property type="gene designation" value="PFN2"/>
</dbReference>
<dbReference type="HPA" id="ENSG00000070087">
    <property type="expression patterns" value="Tissue enhanced (brain)"/>
</dbReference>
<dbReference type="MIM" id="176590">
    <property type="type" value="gene"/>
</dbReference>
<dbReference type="neXtProt" id="NX_P35080"/>
<dbReference type="OpenTargets" id="ENSG00000070087"/>
<dbReference type="PharmGKB" id="PA33220"/>
<dbReference type="VEuPathDB" id="HostDB:ENSG00000070087"/>
<dbReference type="eggNOG" id="KOG1755">
    <property type="taxonomic scope" value="Eukaryota"/>
</dbReference>
<dbReference type="GeneTree" id="ENSGT00940000153664"/>
<dbReference type="InParanoid" id="P35080"/>
<dbReference type="OMA" id="RESFFAC"/>
<dbReference type="OrthoDB" id="9485603at2759"/>
<dbReference type="PAN-GO" id="P35080">
    <property type="GO annotations" value="4 GO annotations based on evolutionary models"/>
</dbReference>
<dbReference type="PhylomeDB" id="P35080"/>
<dbReference type="TreeFam" id="TF331744"/>
<dbReference type="PathwayCommons" id="P35080"/>
<dbReference type="Reactome" id="R-HSA-376176">
    <property type="pathway name" value="Signaling by ROBO receptors"/>
</dbReference>
<dbReference type="Reactome" id="R-HSA-5663220">
    <property type="pathway name" value="RHO GTPases Activate Formins"/>
</dbReference>
<dbReference type="SignaLink" id="P35080"/>
<dbReference type="BioGRID-ORCS" id="5217">
    <property type="hits" value="7 hits in 1153 CRISPR screens"/>
</dbReference>
<dbReference type="CD-CODE" id="91857CE7">
    <property type="entry name" value="Nucleolus"/>
</dbReference>
<dbReference type="CD-CODE" id="DEE660B4">
    <property type="entry name" value="Stress granule"/>
</dbReference>
<dbReference type="ChiTaRS" id="PFN2">
    <property type="organism name" value="human"/>
</dbReference>
<dbReference type="EvolutionaryTrace" id="P35080"/>
<dbReference type="GeneWiki" id="PFN2"/>
<dbReference type="GenomeRNAi" id="5217"/>
<dbReference type="Pharos" id="P35080">
    <property type="development level" value="Tbio"/>
</dbReference>
<dbReference type="PRO" id="PR:P35080"/>
<dbReference type="Proteomes" id="UP000005640">
    <property type="component" value="Chromosome 3"/>
</dbReference>
<dbReference type="RNAct" id="P35080">
    <property type="molecule type" value="protein"/>
</dbReference>
<dbReference type="Bgee" id="ENSG00000070087">
    <property type="expression patterns" value="Expressed in frontal pole and 214 other cell types or tissues"/>
</dbReference>
<dbReference type="ExpressionAtlas" id="P35080">
    <property type="expression patterns" value="baseline and differential"/>
</dbReference>
<dbReference type="GO" id="GO:0005737">
    <property type="term" value="C:cytoplasm"/>
    <property type="evidence" value="ECO:0000318"/>
    <property type="project" value="GO_Central"/>
</dbReference>
<dbReference type="GO" id="GO:0005856">
    <property type="term" value="C:cytoskeleton"/>
    <property type="evidence" value="ECO:0007669"/>
    <property type="project" value="UniProtKB-SubCell"/>
</dbReference>
<dbReference type="GO" id="GO:0070062">
    <property type="term" value="C:extracellular exosome"/>
    <property type="evidence" value="ECO:0007005"/>
    <property type="project" value="UniProtKB"/>
</dbReference>
<dbReference type="GO" id="GO:0098978">
    <property type="term" value="C:glutamatergic synapse"/>
    <property type="evidence" value="ECO:0007669"/>
    <property type="project" value="Ensembl"/>
</dbReference>
<dbReference type="GO" id="GO:0098794">
    <property type="term" value="C:postsynapse"/>
    <property type="evidence" value="ECO:0007669"/>
    <property type="project" value="Ensembl"/>
</dbReference>
<dbReference type="GO" id="GO:0098793">
    <property type="term" value="C:presynapse"/>
    <property type="evidence" value="ECO:0007669"/>
    <property type="project" value="Ensembl"/>
</dbReference>
<dbReference type="GO" id="GO:0098685">
    <property type="term" value="C:Schaffer collateral - CA1 synapse"/>
    <property type="evidence" value="ECO:0007669"/>
    <property type="project" value="Ensembl"/>
</dbReference>
<dbReference type="GO" id="GO:0003779">
    <property type="term" value="F:actin binding"/>
    <property type="evidence" value="ECO:0000318"/>
    <property type="project" value="GO_Central"/>
</dbReference>
<dbReference type="GO" id="GO:0003785">
    <property type="term" value="F:actin monomer binding"/>
    <property type="evidence" value="ECO:0000353"/>
    <property type="project" value="UniProtKB"/>
</dbReference>
<dbReference type="GO" id="GO:0016887">
    <property type="term" value="F:ATP hydrolysis activity"/>
    <property type="evidence" value="ECO:0000314"/>
    <property type="project" value="GO_Central"/>
</dbReference>
<dbReference type="GO" id="GO:0005546">
    <property type="term" value="F:phosphatidylinositol-4,5-bisphosphate binding"/>
    <property type="evidence" value="ECO:0000314"/>
    <property type="project" value="UniProtKB"/>
</dbReference>
<dbReference type="GO" id="GO:0098885">
    <property type="term" value="P:modification of postsynaptic actin cytoskeleton"/>
    <property type="evidence" value="ECO:0007669"/>
    <property type="project" value="Ensembl"/>
</dbReference>
<dbReference type="GO" id="GO:0030837">
    <property type="term" value="P:negative regulation of actin filament polymerization"/>
    <property type="evidence" value="ECO:0000314"/>
    <property type="project" value="UniProtKB"/>
</dbReference>
<dbReference type="GO" id="GO:0010633">
    <property type="term" value="P:negative regulation of epithelial cell migration"/>
    <property type="evidence" value="ECO:0000315"/>
    <property type="project" value="UniProtKB"/>
</dbReference>
<dbReference type="GO" id="GO:1900028">
    <property type="term" value="P:negative regulation of ruffle assembly"/>
    <property type="evidence" value="ECO:0000315"/>
    <property type="project" value="UniProtKB"/>
</dbReference>
<dbReference type="GO" id="GO:0032233">
    <property type="term" value="P:positive regulation of actin filament bundle assembly"/>
    <property type="evidence" value="ECO:0000315"/>
    <property type="project" value="UniProtKB"/>
</dbReference>
<dbReference type="GO" id="GO:0030838">
    <property type="term" value="P:positive regulation of actin filament polymerization"/>
    <property type="evidence" value="ECO:0000316"/>
    <property type="project" value="UniProtKB"/>
</dbReference>
<dbReference type="GO" id="GO:0032781">
    <property type="term" value="P:positive regulation of ATP-dependent activity"/>
    <property type="evidence" value="ECO:0000314"/>
    <property type="project" value="UniProtKB"/>
</dbReference>
<dbReference type="GO" id="GO:0033138">
    <property type="term" value="P:positive regulation of peptidyl-serine phosphorylation"/>
    <property type="evidence" value="ECO:0000315"/>
    <property type="project" value="UniProtKB"/>
</dbReference>
<dbReference type="GO" id="GO:0051496">
    <property type="term" value="P:positive regulation of stress fiber assembly"/>
    <property type="evidence" value="ECO:0000315"/>
    <property type="project" value="UniProtKB"/>
</dbReference>
<dbReference type="GO" id="GO:0099140">
    <property type="term" value="P:presynaptic actin cytoskeleton organization"/>
    <property type="evidence" value="ECO:0007669"/>
    <property type="project" value="Ensembl"/>
</dbReference>
<dbReference type="GO" id="GO:0099171">
    <property type="term" value="P:presynaptic modulation of chemical synaptic transmission"/>
    <property type="evidence" value="ECO:0007669"/>
    <property type="project" value="Ensembl"/>
</dbReference>
<dbReference type="GO" id="GO:0050821">
    <property type="term" value="P:protein stabilization"/>
    <property type="evidence" value="ECO:0000314"/>
    <property type="project" value="UniProtKB"/>
</dbReference>
<dbReference type="GO" id="GO:0030833">
    <property type="term" value="P:regulation of actin filament polymerization"/>
    <property type="evidence" value="ECO:0000318"/>
    <property type="project" value="GO_Central"/>
</dbReference>
<dbReference type="GO" id="GO:2000300">
    <property type="term" value="P:regulation of synaptic vesicle exocytosis"/>
    <property type="evidence" value="ECO:0007669"/>
    <property type="project" value="Ensembl"/>
</dbReference>
<dbReference type="CDD" id="cd00148">
    <property type="entry name" value="PROF"/>
    <property type="match status" value="1"/>
</dbReference>
<dbReference type="FunFam" id="3.30.450.30:FF:000006">
    <property type="entry name" value="Profilin"/>
    <property type="match status" value="1"/>
</dbReference>
<dbReference type="Gene3D" id="3.30.450.30">
    <property type="entry name" value="Dynein light chain 2a, cytoplasmic"/>
    <property type="match status" value="1"/>
</dbReference>
<dbReference type="InterPro" id="IPR048278">
    <property type="entry name" value="PFN"/>
</dbReference>
<dbReference type="InterPro" id="IPR005455">
    <property type="entry name" value="PFN_euk"/>
</dbReference>
<dbReference type="InterPro" id="IPR036140">
    <property type="entry name" value="PFN_sf"/>
</dbReference>
<dbReference type="InterPro" id="IPR005454">
    <property type="entry name" value="Profilin1/2/3_vertebrate"/>
</dbReference>
<dbReference type="InterPro" id="IPR027310">
    <property type="entry name" value="Profilin_CS"/>
</dbReference>
<dbReference type="PANTHER" id="PTHR13936">
    <property type="entry name" value="PROFILIN"/>
    <property type="match status" value="1"/>
</dbReference>
<dbReference type="PANTHER" id="PTHR13936:SF15">
    <property type="entry name" value="PROFILIN-2"/>
    <property type="match status" value="1"/>
</dbReference>
<dbReference type="Pfam" id="PF00235">
    <property type="entry name" value="Profilin"/>
    <property type="match status" value="1"/>
</dbReference>
<dbReference type="PRINTS" id="PR00392">
    <property type="entry name" value="PROFILIN"/>
</dbReference>
<dbReference type="PRINTS" id="PR01639">
    <property type="entry name" value="PROFILINMAML"/>
</dbReference>
<dbReference type="SMART" id="SM00392">
    <property type="entry name" value="PROF"/>
    <property type="match status" value="1"/>
</dbReference>
<dbReference type="SUPFAM" id="SSF55770">
    <property type="entry name" value="Profilin (actin-binding protein)"/>
    <property type="match status" value="1"/>
</dbReference>
<dbReference type="PROSITE" id="PS00414">
    <property type="entry name" value="PROFILIN"/>
    <property type="match status" value="1"/>
</dbReference>
<protein>
    <recommendedName>
        <fullName>Profilin-2</fullName>
    </recommendedName>
    <alternativeName>
        <fullName>Profilin II</fullName>
    </alternativeName>
</protein>
<name>PROF2_HUMAN</name>
<keyword id="KW-0002">3D-structure</keyword>
<keyword id="KW-0007">Acetylation</keyword>
<keyword id="KW-0009">Actin-binding</keyword>
<keyword id="KW-0025">Alternative splicing</keyword>
<keyword id="KW-0963">Cytoplasm</keyword>
<keyword id="KW-0206">Cytoskeleton</keyword>
<keyword id="KW-0903">Direct protein sequencing</keyword>
<keyword id="KW-1267">Proteomics identification</keyword>
<keyword id="KW-1185">Reference proteome</keyword>
<organism>
    <name type="scientific">Homo sapiens</name>
    <name type="common">Human</name>
    <dbReference type="NCBI Taxonomy" id="9606"/>
    <lineage>
        <taxon>Eukaryota</taxon>
        <taxon>Metazoa</taxon>
        <taxon>Chordata</taxon>
        <taxon>Craniata</taxon>
        <taxon>Vertebrata</taxon>
        <taxon>Euteleostomi</taxon>
        <taxon>Mammalia</taxon>
        <taxon>Eutheria</taxon>
        <taxon>Euarchontoglires</taxon>
        <taxon>Primates</taxon>
        <taxon>Haplorrhini</taxon>
        <taxon>Catarrhini</taxon>
        <taxon>Hominidae</taxon>
        <taxon>Homo</taxon>
    </lineage>
</organism>